<keyword id="KW-0963">Cytoplasm</keyword>
<keyword id="KW-0275">Fatty acid biosynthesis</keyword>
<keyword id="KW-0276">Fatty acid metabolism</keyword>
<keyword id="KW-0413">Isomerase</keyword>
<keyword id="KW-0444">Lipid biosynthesis</keyword>
<keyword id="KW-0443">Lipid metabolism</keyword>
<keyword id="KW-0456">Lyase</keyword>
<accession>B5R6C0</accession>
<name>FABA_SALG2</name>
<dbReference type="EC" id="4.2.1.59" evidence="1"/>
<dbReference type="EC" id="5.3.3.14" evidence="1"/>
<dbReference type="EMBL" id="AM933173">
    <property type="protein sequence ID" value="CAR36847.1"/>
    <property type="molecule type" value="Genomic_DNA"/>
</dbReference>
<dbReference type="RefSeq" id="WP_000227928.1">
    <property type="nucleotide sequence ID" value="NC_011274.1"/>
</dbReference>
<dbReference type="SMR" id="B5R6C0"/>
<dbReference type="KEGG" id="seg:SG0957"/>
<dbReference type="HOGENOM" id="CLU_097925_0_0_6"/>
<dbReference type="UniPathway" id="UPA00094"/>
<dbReference type="Proteomes" id="UP000008321">
    <property type="component" value="Chromosome"/>
</dbReference>
<dbReference type="GO" id="GO:0005737">
    <property type="term" value="C:cytoplasm"/>
    <property type="evidence" value="ECO:0007669"/>
    <property type="project" value="UniProtKB-SubCell"/>
</dbReference>
<dbReference type="GO" id="GO:0019171">
    <property type="term" value="F:(3R)-hydroxyacyl-[acyl-carrier-protein] dehydratase activity"/>
    <property type="evidence" value="ECO:0007669"/>
    <property type="project" value="UniProtKB-UniRule"/>
</dbReference>
<dbReference type="GO" id="GO:0034017">
    <property type="term" value="F:trans-2-decenoyl-acyl-carrier-protein isomerase activity"/>
    <property type="evidence" value="ECO:0007669"/>
    <property type="project" value="UniProtKB-UniRule"/>
</dbReference>
<dbReference type="GO" id="GO:0006636">
    <property type="term" value="P:unsaturated fatty acid biosynthetic process"/>
    <property type="evidence" value="ECO:0007669"/>
    <property type="project" value="UniProtKB-UniRule"/>
</dbReference>
<dbReference type="CDD" id="cd01287">
    <property type="entry name" value="FabA"/>
    <property type="match status" value="1"/>
</dbReference>
<dbReference type="FunFam" id="3.10.129.10:FF:000003">
    <property type="entry name" value="3-hydroxydecanoyl-[acyl-carrier-protein] dehydratase"/>
    <property type="match status" value="1"/>
</dbReference>
<dbReference type="Gene3D" id="3.10.129.10">
    <property type="entry name" value="Hotdog Thioesterase"/>
    <property type="match status" value="1"/>
</dbReference>
<dbReference type="HAMAP" id="MF_00405">
    <property type="entry name" value="FabA"/>
    <property type="match status" value="1"/>
</dbReference>
<dbReference type="InterPro" id="IPR010083">
    <property type="entry name" value="FabA"/>
</dbReference>
<dbReference type="InterPro" id="IPR013114">
    <property type="entry name" value="FabA_FabZ"/>
</dbReference>
<dbReference type="InterPro" id="IPR029069">
    <property type="entry name" value="HotDog_dom_sf"/>
</dbReference>
<dbReference type="NCBIfam" id="TIGR01749">
    <property type="entry name" value="fabA"/>
    <property type="match status" value="1"/>
</dbReference>
<dbReference type="NCBIfam" id="NF003509">
    <property type="entry name" value="PRK05174.1"/>
    <property type="match status" value="1"/>
</dbReference>
<dbReference type="PANTHER" id="PTHR30272">
    <property type="entry name" value="3-HYDROXYACYL-[ACYL-CARRIER-PROTEIN] DEHYDRATASE"/>
    <property type="match status" value="1"/>
</dbReference>
<dbReference type="PANTHER" id="PTHR30272:SF8">
    <property type="entry name" value="3-HYDROXYDECANOYL-[ACYL-CARRIER-PROTEIN] DEHYDRATASE"/>
    <property type="match status" value="1"/>
</dbReference>
<dbReference type="Pfam" id="PF07977">
    <property type="entry name" value="FabA"/>
    <property type="match status" value="1"/>
</dbReference>
<dbReference type="SUPFAM" id="SSF54637">
    <property type="entry name" value="Thioesterase/thiol ester dehydrase-isomerase"/>
    <property type="match status" value="1"/>
</dbReference>
<gene>
    <name evidence="1" type="primary">fabA</name>
    <name type="ordered locus">SG0957</name>
</gene>
<comment type="function">
    <text evidence="1">Necessary for the introduction of cis unsaturation into fatty acids. Catalyzes the dehydration of (3R)-3-hydroxydecanoyl-ACP to E-(2)-decenoyl-ACP and then its isomerization to Z-(3)-decenoyl-ACP. Can catalyze the dehydratase reaction for beta-hydroxyacyl-ACPs with saturated chain lengths up to 16:0, being most active on intermediate chain length.</text>
</comment>
<comment type="catalytic activity">
    <reaction evidence="1">
        <text>a (3R)-hydroxyacyl-[ACP] = a (2E)-enoyl-[ACP] + H2O</text>
        <dbReference type="Rhea" id="RHEA:13097"/>
        <dbReference type="Rhea" id="RHEA-COMP:9925"/>
        <dbReference type="Rhea" id="RHEA-COMP:9945"/>
        <dbReference type="ChEBI" id="CHEBI:15377"/>
        <dbReference type="ChEBI" id="CHEBI:78784"/>
        <dbReference type="ChEBI" id="CHEBI:78827"/>
        <dbReference type="EC" id="4.2.1.59"/>
    </reaction>
</comment>
<comment type="catalytic activity">
    <reaction evidence="1">
        <text>(3R)-hydroxydecanoyl-[ACP] = (2E)-decenoyl-[ACP] + H2O</text>
        <dbReference type="Rhea" id="RHEA:41860"/>
        <dbReference type="Rhea" id="RHEA-COMP:9638"/>
        <dbReference type="Rhea" id="RHEA-COMP:9639"/>
        <dbReference type="ChEBI" id="CHEBI:15377"/>
        <dbReference type="ChEBI" id="CHEBI:78466"/>
        <dbReference type="ChEBI" id="CHEBI:78467"/>
    </reaction>
</comment>
<comment type="catalytic activity">
    <reaction evidence="1">
        <text>(2E)-decenoyl-[ACP] = (3Z)-decenoyl-[ACP]</text>
        <dbReference type="Rhea" id="RHEA:23568"/>
        <dbReference type="Rhea" id="RHEA-COMP:9639"/>
        <dbReference type="Rhea" id="RHEA-COMP:9927"/>
        <dbReference type="ChEBI" id="CHEBI:78467"/>
        <dbReference type="ChEBI" id="CHEBI:78798"/>
        <dbReference type="EC" id="5.3.3.14"/>
    </reaction>
</comment>
<comment type="pathway">
    <text evidence="1">Lipid metabolism; fatty acid biosynthesis.</text>
</comment>
<comment type="subunit">
    <text evidence="1">Homodimer.</text>
</comment>
<comment type="subcellular location">
    <subcellularLocation>
        <location evidence="1">Cytoplasm</location>
    </subcellularLocation>
</comment>
<comment type="similarity">
    <text evidence="1">Belongs to the thioester dehydratase family. FabA subfamily.</text>
</comment>
<evidence type="ECO:0000255" key="1">
    <source>
        <dbReference type="HAMAP-Rule" id="MF_00405"/>
    </source>
</evidence>
<proteinExistence type="inferred from homology"/>
<protein>
    <recommendedName>
        <fullName evidence="1">3-hydroxydecanoyl-[acyl-carrier-protein] dehydratase</fullName>
        <ecNumber evidence="1">4.2.1.59</ecNumber>
    </recommendedName>
    <alternativeName>
        <fullName evidence="1">3-hydroxyacyl-[acyl-carrier-protein] dehydratase FabA</fullName>
    </alternativeName>
    <alternativeName>
        <fullName evidence="1">Beta-hydroxydecanoyl thioester dehydrase</fullName>
    </alternativeName>
    <alternativeName>
        <fullName evidence="1">Trans-2-decenoyl-[acyl-carrier-protein] isomerase</fullName>
        <ecNumber evidence="1">5.3.3.14</ecNumber>
    </alternativeName>
</protein>
<reference key="1">
    <citation type="journal article" date="2008" name="Genome Res.">
        <title>Comparative genome analysis of Salmonella enteritidis PT4 and Salmonella gallinarum 287/91 provides insights into evolutionary and host adaptation pathways.</title>
        <authorList>
            <person name="Thomson N.R."/>
            <person name="Clayton D.J."/>
            <person name="Windhorst D."/>
            <person name="Vernikos G."/>
            <person name="Davidson S."/>
            <person name="Churcher C."/>
            <person name="Quail M.A."/>
            <person name="Stevens M."/>
            <person name="Jones M.A."/>
            <person name="Watson M."/>
            <person name="Barron A."/>
            <person name="Layton A."/>
            <person name="Pickard D."/>
            <person name="Kingsley R.A."/>
            <person name="Bignell A."/>
            <person name="Clark L."/>
            <person name="Harris B."/>
            <person name="Ormond D."/>
            <person name="Abdellah Z."/>
            <person name="Brooks K."/>
            <person name="Cherevach I."/>
            <person name="Chillingworth T."/>
            <person name="Woodward J."/>
            <person name="Norberczak H."/>
            <person name="Lord A."/>
            <person name="Arrowsmith C."/>
            <person name="Jagels K."/>
            <person name="Moule S."/>
            <person name="Mungall K."/>
            <person name="Saunders M."/>
            <person name="Whitehead S."/>
            <person name="Chabalgoity J.A."/>
            <person name="Maskell D."/>
            <person name="Humphreys T."/>
            <person name="Roberts M."/>
            <person name="Barrow P.A."/>
            <person name="Dougan G."/>
            <person name="Parkhill J."/>
        </authorList>
    </citation>
    <scope>NUCLEOTIDE SEQUENCE [LARGE SCALE GENOMIC DNA]</scope>
    <source>
        <strain>287/91 / NCTC 13346</strain>
    </source>
</reference>
<feature type="chain" id="PRO_1000201201" description="3-hydroxydecanoyl-[acyl-carrier-protein] dehydratase">
    <location>
        <begin position="1"/>
        <end position="172"/>
    </location>
</feature>
<feature type="active site" evidence="1">
    <location>
        <position position="71"/>
    </location>
</feature>
<organism>
    <name type="scientific">Salmonella gallinarum (strain 287/91 / NCTC 13346)</name>
    <dbReference type="NCBI Taxonomy" id="550538"/>
    <lineage>
        <taxon>Bacteria</taxon>
        <taxon>Pseudomonadati</taxon>
        <taxon>Pseudomonadota</taxon>
        <taxon>Gammaproteobacteria</taxon>
        <taxon>Enterobacterales</taxon>
        <taxon>Enterobacteriaceae</taxon>
        <taxon>Salmonella</taxon>
    </lineage>
</organism>
<sequence length="172" mass="19047">MVDKRESYTKEDLLASGRGELFGAKGPQLPAPNMLMMDRVVKMTETGGNFDKGYVEAELDINPDLWFFGCHFIGDPVMPGCLGLDAMWQLVGFYLGWLGGEGKGRALGVGEVKFTGQVLPTARKVTYRIHFKRIVNRRLIMGLADGEVLVDGRLIYTAHDLKVGLFQDTSAF</sequence>